<accession>Q5F289</accession>
<accession>Q497J9</accession>
<accession>Q9D9D4</accession>
<name>SPEM1_MOUSE</name>
<sequence>MAMAERPRPGWASYQNPNINNCQDMGNSILLLLGLIVCINIGINLVTLLWSRIRILLHRMFHIICEKETSTSLGKLVQPLRKQTYPKVHLRCTMDPVKMTVTPPPTRRRYRHRAPPSRRARCPIAWAPDTDDEKPPHQHPAICSRHWNDSKDWEGFQSMQEVWEPWTQDGLEQPPQTIRFQPAVEARPLKSEIRSDQGLEAYVYTVNPPPPSPEALSHKNNAAGSGGCVEGEQAQGQPVSPSFLGPANVPEIPRRHSSGRIVYDARDVRRRLRELTQEVEALSHCYPLVSGSSAAEGTGKDWVYRPLKGR</sequence>
<gene>
    <name type="primary">Spem1</name>
</gene>
<reference key="1">
    <citation type="journal article" date="2007" name="Proc. Natl. Acad. Sci. U.S.A.">
        <title>Lack of Spem1 causes aberrant cytoplasm removal, sperm deformation, and male infertility.</title>
        <authorList>
            <person name="Zheng H."/>
            <person name="Stratton C.J."/>
            <person name="Morozumi K."/>
            <person name="Jin J."/>
            <person name="Yanagimachi R."/>
            <person name="Yan W."/>
        </authorList>
    </citation>
    <scope>NUCLEOTIDE SEQUENCE [MRNA]</scope>
    <scope>FUNCTION</scope>
    <scope>SUBCELLULAR LOCATION</scope>
    <scope>TISSUE SPECIFICITY</scope>
    <scope>DISRUPTION PHENOTYPE</scope>
    <source>
        <strain>C57BL/6J</strain>
        <tissue>Testis</tissue>
    </source>
</reference>
<reference key="2">
    <citation type="journal article" date="2005" name="Science">
        <title>The transcriptional landscape of the mammalian genome.</title>
        <authorList>
            <person name="Carninci P."/>
            <person name="Kasukawa T."/>
            <person name="Katayama S."/>
            <person name="Gough J."/>
            <person name="Frith M.C."/>
            <person name="Maeda N."/>
            <person name="Oyama R."/>
            <person name="Ravasi T."/>
            <person name="Lenhard B."/>
            <person name="Wells C."/>
            <person name="Kodzius R."/>
            <person name="Shimokawa K."/>
            <person name="Bajic V.B."/>
            <person name="Brenner S.E."/>
            <person name="Batalov S."/>
            <person name="Forrest A.R."/>
            <person name="Zavolan M."/>
            <person name="Davis M.J."/>
            <person name="Wilming L.G."/>
            <person name="Aidinis V."/>
            <person name="Allen J.E."/>
            <person name="Ambesi-Impiombato A."/>
            <person name="Apweiler R."/>
            <person name="Aturaliya R.N."/>
            <person name="Bailey T.L."/>
            <person name="Bansal M."/>
            <person name="Baxter L."/>
            <person name="Beisel K.W."/>
            <person name="Bersano T."/>
            <person name="Bono H."/>
            <person name="Chalk A.M."/>
            <person name="Chiu K.P."/>
            <person name="Choudhary V."/>
            <person name="Christoffels A."/>
            <person name="Clutterbuck D.R."/>
            <person name="Crowe M.L."/>
            <person name="Dalla E."/>
            <person name="Dalrymple B.P."/>
            <person name="de Bono B."/>
            <person name="Della Gatta G."/>
            <person name="di Bernardo D."/>
            <person name="Down T."/>
            <person name="Engstrom P."/>
            <person name="Fagiolini M."/>
            <person name="Faulkner G."/>
            <person name="Fletcher C.F."/>
            <person name="Fukushima T."/>
            <person name="Furuno M."/>
            <person name="Futaki S."/>
            <person name="Gariboldi M."/>
            <person name="Georgii-Hemming P."/>
            <person name="Gingeras T.R."/>
            <person name="Gojobori T."/>
            <person name="Green R.E."/>
            <person name="Gustincich S."/>
            <person name="Harbers M."/>
            <person name="Hayashi Y."/>
            <person name="Hensch T.K."/>
            <person name="Hirokawa N."/>
            <person name="Hill D."/>
            <person name="Huminiecki L."/>
            <person name="Iacono M."/>
            <person name="Ikeo K."/>
            <person name="Iwama A."/>
            <person name="Ishikawa T."/>
            <person name="Jakt M."/>
            <person name="Kanapin A."/>
            <person name="Katoh M."/>
            <person name="Kawasawa Y."/>
            <person name="Kelso J."/>
            <person name="Kitamura H."/>
            <person name="Kitano H."/>
            <person name="Kollias G."/>
            <person name="Krishnan S.P."/>
            <person name="Kruger A."/>
            <person name="Kummerfeld S.K."/>
            <person name="Kurochkin I.V."/>
            <person name="Lareau L.F."/>
            <person name="Lazarevic D."/>
            <person name="Lipovich L."/>
            <person name="Liu J."/>
            <person name="Liuni S."/>
            <person name="McWilliam S."/>
            <person name="Madan Babu M."/>
            <person name="Madera M."/>
            <person name="Marchionni L."/>
            <person name="Matsuda H."/>
            <person name="Matsuzawa S."/>
            <person name="Miki H."/>
            <person name="Mignone F."/>
            <person name="Miyake S."/>
            <person name="Morris K."/>
            <person name="Mottagui-Tabar S."/>
            <person name="Mulder N."/>
            <person name="Nakano N."/>
            <person name="Nakauchi H."/>
            <person name="Ng P."/>
            <person name="Nilsson R."/>
            <person name="Nishiguchi S."/>
            <person name="Nishikawa S."/>
            <person name="Nori F."/>
            <person name="Ohara O."/>
            <person name="Okazaki Y."/>
            <person name="Orlando V."/>
            <person name="Pang K.C."/>
            <person name="Pavan W.J."/>
            <person name="Pavesi G."/>
            <person name="Pesole G."/>
            <person name="Petrovsky N."/>
            <person name="Piazza S."/>
            <person name="Reed J."/>
            <person name="Reid J.F."/>
            <person name="Ring B.Z."/>
            <person name="Ringwald M."/>
            <person name="Rost B."/>
            <person name="Ruan Y."/>
            <person name="Salzberg S.L."/>
            <person name="Sandelin A."/>
            <person name="Schneider C."/>
            <person name="Schoenbach C."/>
            <person name="Sekiguchi K."/>
            <person name="Semple C.A."/>
            <person name="Seno S."/>
            <person name="Sessa L."/>
            <person name="Sheng Y."/>
            <person name="Shibata Y."/>
            <person name="Shimada H."/>
            <person name="Shimada K."/>
            <person name="Silva D."/>
            <person name="Sinclair B."/>
            <person name="Sperling S."/>
            <person name="Stupka E."/>
            <person name="Sugiura K."/>
            <person name="Sultana R."/>
            <person name="Takenaka Y."/>
            <person name="Taki K."/>
            <person name="Tammoja K."/>
            <person name="Tan S.L."/>
            <person name="Tang S."/>
            <person name="Taylor M.S."/>
            <person name="Tegner J."/>
            <person name="Teichmann S.A."/>
            <person name="Ueda H.R."/>
            <person name="van Nimwegen E."/>
            <person name="Verardo R."/>
            <person name="Wei C.L."/>
            <person name="Yagi K."/>
            <person name="Yamanishi H."/>
            <person name="Zabarovsky E."/>
            <person name="Zhu S."/>
            <person name="Zimmer A."/>
            <person name="Hide W."/>
            <person name="Bult C."/>
            <person name="Grimmond S.M."/>
            <person name="Teasdale R.D."/>
            <person name="Liu E.T."/>
            <person name="Brusic V."/>
            <person name="Quackenbush J."/>
            <person name="Wahlestedt C."/>
            <person name="Mattick J.S."/>
            <person name="Hume D.A."/>
            <person name="Kai C."/>
            <person name="Sasaki D."/>
            <person name="Tomaru Y."/>
            <person name="Fukuda S."/>
            <person name="Kanamori-Katayama M."/>
            <person name="Suzuki M."/>
            <person name="Aoki J."/>
            <person name="Arakawa T."/>
            <person name="Iida J."/>
            <person name="Imamura K."/>
            <person name="Itoh M."/>
            <person name="Kato T."/>
            <person name="Kawaji H."/>
            <person name="Kawagashira N."/>
            <person name="Kawashima T."/>
            <person name="Kojima M."/>
            <person name="Kondo S."/>
            <person name="Konno H."/>
            <person name="Nakano K."/>
            <person name="Ninomiya N."/>
            <person name="Nishio T."/>
            <person name="Okada M."/>
            <person name="Plessy C."/>
            <person name="Shibata K."/>
            <person name="Shiraki T."/>
            <person name="Suzuki S."/>
            <person name="Tagami M."/>
            <person name="Waki K."/>
            <person name="Watahiki A."/>
            <person name="Okamura-Oho Y."/>
            <person name="Suzuki H."/>
            <person name="Kawai J."/>
            <person name="Hayashizaki Y."/>
        </authorList>
    </citation>
    <scope>NUCLEOTIDE SEQUENCE [LARGE SCALE MRNA]</scope>
    <source>
        <strain>C57BL/6J</strain>
        <tissue>Testis</tissue>
    </source>
</reference>
<reference key="3">
    <citation type="journal article" date="2009" name="PLoS Biol.">
        <title>Lineage-specific biology revealed by a finished genome assembly of the mouse.</title>
        <authorList>
            <person name="Church D.M."/>
            <person name="Goodstadt L."/>
            <person name="Hillier L.W."/>
            <person name="Zody M.C."/>
            <person name="Goldstein S."/>
            <person name="She X."/>
            <person name="Bult C.J."/>
            <person name="Agarwala R."/>
            <person name="Cherry J.L."/>
            <person name="DiCuccio M."/>
            <person name="Hlavina W."/>
            <person name="Kapustin Y."/>
            <person name="Meric P."/>
            <person name="Maglott D."/>
            <person name="Birtle Z."/>
            <person name="Marques A.C."/>
            <person name="Graves T."/>
            <person name="Zhou S."/>
            <person name="Teague B."/>
            <person name="Potamousis K."/>
            <person name="Churas C."/>
            <person name="Place M."/>
            <person name="Herschleb J."/>
            <person name="Runnheim R."/>
            <person name="Forrest D."/>
            <person name="Amos-Landgraf J."/>
            <person name="Schwartz D.C."/>
            <person name="Cheng Z."/>
            <person name="Lindblad-Toh K."/>
            <person name="Eichler E.E."/>
            <person name="Ponting C.P."/>
        </authorList>
    </citation>
    <scope>NUCLEOTIDE SEQUENCE [LARGE SCALE GENOMIC DNA]</scope>
    <source>
        <strain>C57BL/6J</strain>
    </source>
</reference>
<reference key="4">
    <citation type="journal article" date="2004" name="Genome Res.">
        <title>The status, quality, and expansion of the NIH full-length cDNA project: the Mammalian Gene Collection (MGC).</title>
        <authorList>
            <consortium name="The MGC Project Team"/>
        </authorList>
    </citation>
    <scope>NUCLEOTIDE SEQUENCE [LARGE SCALE MRNA]</scope>
    <source>
        <tissue>Testis</tissue>
    </source>
</reference>
<feature type="chain" id="PRO_0000307807" description="Spermatid maturation protein 1">
    <location>
        <begin position="1"/>
        <end position="310"/>
    </location>
</feature>
<feature type="transmembrane region" description="Helical" evidence="1">
    <location>
        <begin position="29"/>
        <end position="49"/>
    </location>
</feature>
<feature type="region of interest" description="Disordered" evidence="2">
    <location>
        <begin position="215"/>
        <end position="238"/>
    </location>
</feature>
<feature type="coiled-coil region" evidence="1">
    <location>
        <begin position="262"/>
        <end position="286"/>
    </location>
</feature>
<feature type="sequence conflict" description="In Ref. 2; BAB24854." evidence="4" ref="2">
    <original>R</original>
    <variation>Q</variation>
    <location>
        <position position="52"/>
    </location>
</feature>
<feature type="sequence conflict" description="In Ref. 4; AAI00506." evidence="4" ref="4">
    <original>P</original>
    <variation>L</variation>
    <location>
        <position position="213"/>
    </location>
</feature>
<proteinExistence type="evidence at protein level"/>
<dbReference type="EMBL" id="EF120626">
    <property type="protein sequence ID" value="ABO33756.1"/>
    <property type="molecule type" value="mRNA"/>
</dbReference>
<dbReference type="EMBL" id="AK007080">
    <property type="protein sequence ID" value="BAB24854.1"/>
    <property type="molecule type" value="mRNA"/>
</dbReference>
<dbReference type="EMBL" id="AL603707">
    <property type="status" value="NOT_ANNOTATED_CDS"/>
    <property type="molecule type" value="Genomic_DNA"/>
</dbReference>
<dbReference type="EMBL" id="BC100505">
    <property type="protein sequence ID" value="AAI00506.1"/>
    <property type="molecule type" value="mRNA"/>
</dbReference>
<dbReference type="CCDS" id="CCDS36199.1"/>
<dbReference type="RefSeq" id="NP_083131.1">
    <property type="nucleotide sequence ID" value="NM_028855.1"/>
</dbReference>
<dbReference type="BioGRID" id="216637">
    <property type="interactions" value="1"/>
</dbReference>
<dbReference type="FunCoup" id="Q5F289">
    <property type="interactions" value="184"/>
</dbReference>
<dbReference type="STRING" id="10090.ENSMUSP00000037500"/>
<dbReference type="iPTMnet" id="Q5F289"/>
<dbReference type="PhosphoSitePlus" id="Q5F289"/>
<dbReference type="PaxDb" id="10090-ENSMUSP00000037500"/>
<dbReference type="ProteomicsDB" id="257347"/>
<dbReference type="Antibodypedia" id="2661">
    <property type="antibodies" value="104 antibodies from 17 providers"/>
</dbReference>
<dbReference type="Ensembl" id="ENSMUST00000045771.7">
    <property type="protein sequence ID" value="ENSMUSP00000037500.7"/>
    <property type="gene ID" value="ENSMUSG00000041165.7"/>
</dbReference>
<dbReference type="GeneID" id="74288"/>
<dbReference type="KEGG" id="mmu:74288"/>
<dbReference type="UCSC" id="uc007jrv.1">
    <property type="organism name" value="mouse"/>
</dbReference>
<dbReference type="AGR" id="MGI:1921538"/>
<dbReference type="CTD" id="374768"/>
<dbReference type="MGI" id="MGI:1921538">
    <property type="gene designation" value="Spem1"/>
</dbReference>
<dbReference type="VEuPathDB" id="HostDB:ENSMUSG00000041165"/>
<dbReference type="eggNOG" id="ENOG502ST8J">
    <property type="taxonomic scope" value="Eukaryota"/>
</dbReference>
<dbReference type="GeneTree" id="ENSGT00510000049389"/>
<dbReference type="HOGENOM" id="CLU_078808_0_0_1"/>
<dbReference type="InParanoid" id="Q5F289"/>
<dbReference type="OMA" id="PAICSYH"/>
<dbReference type="OrthoDB" id="9447057at2759"/>
<dbReference type="PhylomeDB" id="Q5F289"/>
<dbReference type="TreeFam" id="TF338031"/>
<dbReference type="BioGRID-ORCS" id="74288">
    <property type="hits" value="3 hits in 76 CRISPR screens"/>
</dbReference>
<dbReference type="ChiTaRS" id="Spem1">
    <property type="organism name" value="mouse"/>
</dbReference>
<dbReference type="PRO" id="PR:Q5F289"/>
<dbReference type="Proteomes" id="UP000000589">
    <property type="component" value="Chromosome 11"/>
</dbReference>
<dbReference type="RNAct" id="Q5F289">
    <property type="molecule type" value="protein"/>
</dbReference>
<dbReference type="Bgee" id="ENSMUSG00000041165">
    <property type="expression patterns" value="Expressed in testis and 26 other cell types or tissues"/>
</dbReference>
<dbReference type="GO" id="GO:0005737">
    <property type="term" value="C:cytoplasm"/>
    <property type="evidence" value="ECO:0000314"/>
    <property type="project" value="MGI"/>
</dbReference>
<dbReference type="GO" id="GO:0016020">
    <property type="term" value="C:membrane"/>
    <property type="evidence" value="ECO:0007669"/>
    <property type="project" value="UniProtKB-SubCell"/>
</dbReference>
<dbReference type="GO" id="GO:0030317">
    <property type="term" value="P:flagellated sperm motility"/>
    <property type="evidence" value="ECO:0000315"/>
    <property type="project" value="MGI"/>
</dbReference>
<dbReference type="GO" id="GO:0007291">
    <property type="term" value="P:sperm individualization"/>
    <property type="evidence" value="ECO:0000315"/>
    <property type="project" value="MGI"/>
</dbReference>
<dbReference type="GO" id="GO:0007283">
    <property type="term" value="P:spermatogenesis"/>
    <property type="evidence" value="ECO:0000315"/>
    <property type="project" value="MGI"/>
</dbReference>
<dbReference type="InterPro" id="IPR031368">
    <property type="entry name" value="SPEM1_N"/>
</dbReference>
<dbReference type="PANTHER" id="PTHR34834">
    <property type="entry name" value="SPERMATID MATURATION PROTEIN 1"/>
    <property type="match status" value="1"/>
</dbReference>
<dbReference type="PANTHER" id="PTHR34834:SF1">
    <property type="entry name" value="SPERMATID MATURATION PROTEIN 1"/>
    <property type="match status" value="1"/>
</dbReference>
<dbReference type="Pfam" id="PF15670">
    <property type="entry name" value="Spem1"/>
    <property type="match status" value="1"/>
</dbReference>
<comment type="function">
    <text evidence="3">Required for proper cytoplasm removal during spermatogenesis.</text>
</comment>
<comment type="subcellular location">
    <subcellularLocation>
        <location evidence="4">Membrane</location>
        <topology evidence="4">Single-pass membrane protein</topology>
    </subcellularLocation>
    <subcellularLocation>
        <location evidence="3">Cytoplasm</location>
    </subcellularLocation>
</comment>
<comment type="tissue specificity">
    <text evidence="3">Testis-specific. Exclusively present in cytoplasm of steps 14-16 elongated spermatids (at protein level).</text>
</comment>
<comment type="disruption phenotype">
    <text evidence="3">Mice are completely infertile because of deformed sperm characterized by a bent head wrapped around by the neck and the middle piece of the tail. Lack of Spem1 causes failure of the cytoplasm to become loose and detach from the head and the neck region of the developing spermatozoa.</text>
</comment>
<protein>
    <recommendedName>
        <fullName>Spermatid maturation protein 1</fullName>
    </recommendedName>
</protein>
<organism>
    <name type="scientific">Mus musculus</name>
    <name type="common">Mouse</name>
    <dbReference type="NCBI Taxonomy" id="10090"/>
    <lineage>
        <taxon>Eukaryota</taxon>
        <taxon>Metazoa</taxon>
        <taxon>Chordata</taxon>
        <taxon>Craniata</taxon>
        <taxon>Vertebrata</taxon>
        <taxon>Euteleostomi</taxon>
        <taxon>Mammalia</taxon>
        <taxon>Eutheria</taxon>
        <taxon>Euarchontoglires</taxon>
        <taxon>Glires</taxon>
        <taxon>Rodentia</taxon>
        <taxon>Myomorpha</taxon>
        <taxon>Muroidea</taxon>
        <taxon>Muridae</taxon>
        <taxon>Murinae</taxon>
        <taxon>Mus</taxon>
        <taxon>Mus</taxon>
    </lineage>
</organism>
<keyword id="KW-0175">Coiled coil</keyword>
<keyword id="KW-0963">Cytoplasm</keyword>
<keyword id="KW-0217">Developmental protein</keyword>
<keyword id="KW-0221">Differentiation</keyword>
<keyword id="KW-0472">Membrane</keyword>
<keyword id="KW-1185">Reference proteome</keyword>
<keyword id="KW-0744">Spermatogenesis</keyword>
<keyword id="KW-0812">Transmembrane</keyword>
<keyword id="KW-1133">Transmembrane helix</keyword>
<evidence type="ECO:0000255" key="1"/>
<evidence type="ECO:0000256" key="2">
    <source>
        <dbReference type="SAM" id="MobiDB-lite"/>
    </source>
</evidence>
<evidence type="ECO:0000269" key="3">
    <source>
    </source>
</evidence>
<evidence type="ECO:0000305" key="4"/>